<feature type="chain" id="PRO_0000404092" description="3-methylitaconate isomerase">
    <location>
        <begin position="1"/>
        <end position="380"/>
    </location>
</feature>
<feature type="strand" evidence="8">
    <location>
        <begin position="4"/>
        <end position="14"/>
    </location>
</feature>
<feature type="strand" evidence="8">
    <location>
        <begin position="17"/>
        <end position="23"/>
    </location>
</feature>
<feature type="helix" evidence="8">
    <location>
        <begin position="24"/>
        <end position="26"/>
    </location>
</feature>
<feature type="helix" evidence="8">
    <location>
        <begin position="31"/>
        <end position="42"/>
    </location>
</feature>
<feature type="strand" evidence="8">
    <location>
        <begin position="52"/>
        <end position="54"/>
    </location>
</feature>
<feature type="helix" evidence="8">
    <location>
        <begin position="58"/>
        <end position="60"/>
    </location>
</feature>
<feature type="strand" evidence="8">
    <location>
        <begin position="61"/>
        <end position="68"/>
    </location>
</feature>
<feature type="strand" evidence="8">
    <location>
        <begin position="75"/>
        <end position="83"/>
    </location>
</feature>
<feature type="strand" evidence="8">
    <location>
        <begin position="85"/>
        <end position="88"/>
    </location>
</feature>
<feature type="helix" evidence="8">
    <location>
        <begin position="97"/>
        <end position="109"/>
    </location>
</feature>
<feature type="strand" evidence="8">
    <location>
        <begin position="117"/>
        <end position="126"/>
    </location>
</feature>
<feature type="turn" evidence="8">
    <location>
        <begin position="127"/>
        <end position="129"/>
    </location>
</feature>
<feature type="strand" evidence="8">
    <location>
        <begin position="132"/>
        <end position="140"/>
    </location>
</feature>
<feature type="strand" evidence="8">
    <location>
        <begin position="155"/>
        <end position="157"/>
    </location>
</feature>
<feature type="strand" evidence="8">
    <location>
        <begin position="162"/>
        <end position="165"/>
    </location>
</feature>
<feature type="helix" evidence="8">
    <location>
        <begin position="167"/>
        <end position="169"/>
    </location>
</feature>
<feature type="turn" evidence="8">
    <location>
        <begin position="171"/>
        <end position="174"/>
    </location>
</feature>
<feature type="strand" evidence="8">
    <location>
        <begin position="175"/>
        <end position="178"/>
    </location>
</feature>
<feature type="strand" evidence="8">
    <location>
        <begin position="185"/>
        <end position="187"/>
    </location>
</feature>
<feature type="strand" evidence="8">
    <location>
        <begin position="194"/>
        <end position="210"/>
    </location>
</feature>
<feature type="helix" evidence="8">
    <location>
        <begin position="211"/>
        <end position="213"/>
    </location>
</feature>
<feature type="helix" evidence="8">
    <location>
        <begin position="221"/>
        <end position="225"/>
    </location>
</feature>
<feature type="helix" evidence="8">
    <location>
        <begin position="228"/>
        <end position="244"/>
    </location>
</feature>
<feature type="helix" evidence="8">
    <location>
        <begin position="251"/>
        <end position="257"/>
    </location>
</feature>
<feature type="strand" evidence="8">
    <location>
        <begin position="259"/>
        <end position="269"/>
    </location>
</feature>
<feature type="turn" evidence="8">
    <location>
        <begin position="276"/>
        <end position="278"/>
    </location>
</feature>
<feature type="strand" evidence="8">
    <location>
        <begin position="288"/>
        <end position="294"/>
    </location>
</feature>
<feature type="strand" evidence="8">
    <location>
        <begin position="296"/>
        <end position="299"/>
    </location>
</feature>
<feature type="helix" evidence="8">
    <location>
        <begin position="305"/>
        <end position="316"/>
    </location>
</feature>
<feature type="helix" evidence="8">
    <location>
        <begin position="321"/>
        <end position="325"/>
    </location>
</feature>
<feature type="strand" evidence="8">
    <location>
        <begin position="334"/>
        <end position="339"/>
    </location>
</feature>
<feature type="strand" evidence="8">
    <location>
        <begin position="342"/>
        <end position="351"/>
    </location>
</feature>
<feature type="strand" evidence="8">
    <location>
        <begin position="354"/>
        <end position="362"/>
    </location>
</feature>
<feature type="strand" evidence="8">
    <location>
        <begin position="364"/>
        <end position="375"/>
    </location>
</feature>
<feature type="helix" evidence="8">
    <location>
        <begin position="376"/>
        <end position="378"/>
    </location>
</feature>
<organism>
    <name type="scientific">Eubacterium barkeri</name>
    <name type="common">Clostridium barkeri</name>
    <dbReference type="NCBI Taxonomy" id="1528"/>
    <lineage>
        <taxon>Bacteria</taxon>
        <taxon>Bacillati</taxon>
        <taxon>Bacillota</taxon>
        <taxon>Clostridia</taxon>
        <taxon>Eubacteriales</taxon>
        <taxon>Eubacteriaceae</taxon>
        <taxon>Eubacterium</taxon>
    </lineage>
</organism>
<proteinExistence type="evidence at protein level"/>
<evidence type="ECO:0000269" key="1">
    <source>
    </source>
</evidence>
<evidence type="ECO:0000269" key="2">
    <source>
    </source>
</evidence>
<evidence type="ECO:0000269" key="3">
    <source>
    </source>
</evidence>
<evidence type="ECO:0000269" key="4">
    <source>
    </source>
</evidence>
<evidence type="ECO:0000303" key="5">
    <source>
    </source>
</evidence>
<evidence type="ECO:0000305" key="6"/>
<evidence type="ECO:0000312" key="7">
    <source>
        <dbReference type="EMBL" id="ABC88404.1"/>
    </source>
</evidence>
<evidence type="ECO:0007829" key="8">
    <source>
        <dbReference type="PDB" id="3G7K"/>
    </source>
</evidence>
<protein>
    <recommendedName>
        <fullName>3-methylitaconate isomerase</fullName>
        <ecNumber>5.3.3.6</ecNumber>
    </recommendedName>
    <alternativeName>
        <fullName evidence="5">(R)-3-methylitaconate isomerase</fullName>
    </alternativeName>
    <alternativeName>
        <fullName>3-methylitaconate delta-isomerase</fullName>
    </alternativeName>
</protein>
<keyword id="KW-0002">3D-structure</keyword>
<keyword id="KW-0413">Isomerase</keyword>
<sequence>MSDQMRIPCVIMRAGTSKGIFLKGNDLPADQELRDKVILRIFGSPDVRQIDGLAGADPLTSKLAIIGPSTHPDADVDYTFAQVSITDAVVDYNGNCGNISAGVGPFAIDESFVKAVEPMTRVCIHNTNTGKLLYAEVEVEDGKAKVSGDCKIDGVPGTNAPELMDFSDTAGAATGKVLPTGNVVDVLSTSKGDIDVSIVDVANPCIFVHAKDVNMTGTETPDVINGNADLLAYLEEIRAKCCVKIGMAATEKEASEKSPAFPMIAFVTKPEDYVDFSTGNTISGDDVDLVSRLMFMQVLHKTYAGTATACTGSAARIPGTIVNQVLRDTGDEDTVRIGHPAGVIPVVSIVKDGKVEKAALIRTARRIMEGYVYVEKAKLV</sequence>
<name>MII_EUBBA</name>
<reference evidence="6 7" key="1">
    <citation type="journal article" date="2006" name="Proc. Natl. Acad. Sci. U.S.A.">
        <title>Molecular and functional analysis of nicotinate catabolism in Eubacterium barkeri.</title>
        <authorList>
            <person name="Alhapel A."/>
            <person name="Darley D.J."/>
            <person name="Wagener N."/>
            <person name="Eckel E."/>
            <person name="Elsner N."/>
            <person name="Pierik A.J."/>
        </authorList>
    </citation>
    <scope>NUCLEOTIDE SEQUENCE [GENOMIC DNA]</scope>
    <scope>PATHWAY</scope>
    <source>
        <strain evidence="7">ATCC 25849 / DSM 1223 / JCM 1389 / NCIMB 10623 / VKM B-1775 / VPI 5359</strain>
    </source>
</reference>
<reference evidence="6" key="2">
    <citation type="journal article" date="1971" name="J. Biol. Chem.">
        <title>Nicotinic acid metabolism. VI. Purification and properties of alpha-methyleneglutarate mutase (B 12-dependent) and methylitaconate isomerase.</title>
        <authorList>
            <person name="Kung H.F."/>
            <person name="Stadtman T.C."/>
        </authorList>
    </citation>
    <scope>CATALYTIC ACTIVITY</scope>
    <scope>ACTIVITY REGULATION</scope>
    <scope>INDUCTION</scope>
    <scope>BIOPHYSICOCHEMICAL PROPERTIES</scope>
</reference>
<reference evidence="6" key="3">
    <citation type="journal article" date="1989" name="Eur. J. Biochem.">
        <title>Assay and purification of the adenosylcobalamin-dependent 2-methyleneglutarate mutase from Clostridium barkeri.</title>
        <authorList>
            <person name="Michel C."/>
            <person name="Hartrampf G."/>
            <person name="Buckel W."/>
        </authorList>
    </citation>
    <scope>CATALYTIC ACTIVITY</scope>
    <scope>SUBUNIT</scope>
    <source>
        <strain evidence="3">ATCC 25849 / DSM 1223 / JCM 1389 / NCIMB 10623 / VKM B-1775 / VPI 5359</strain>
    </source>
</reference>
<reference evidence="6" key="4">
    <citation type="journal article" date="2009" name="J. Mol. Biol.">
        <title>Crystal structure and putative mechanism of 3-methylitaconate-delta-isomerase from Eubacterium barkeri.</title>
        <authorList>
            <person name="Velarde M."/>
            <person name="Macieira S."/>
            <person name="Hilberg M."/>
            <person name="Broker G."/>
            <person name="Tu S.M."/>
            <person name="Golding B.T."/>
            <person name="Pierik A.J."/>
            <person name="Buckel W."/>
            <person name="Messerschmidt A."/>
        </authorList>
    </citation>
    <scope>X-RAY CRYSTALLOGRAPHY (2.70 ANGSTROMS)</scope>
    <scope>FUNCTION</scope>
    <scope>CATALYTIC ACTIVITY</scope>
    <scope>BIOPHYSICOCHEMICAL PROPERTIES</scope>
    <scope>SUBUNIT</scope>
</reference>
<accession>Q0QLE6</accession>
<gene>
    <name type="primary">mii</name>
</gene>
<comment type="function">
    <text evidence="2">Catalyzes the reversible isomerization of (R)-3-methylitaconate to 2,3-dimethylmaleate. Has very low isomerase activity with itaconate.</text>
</comment>
<comment type="catalytic activity">
    <reaction evidence="2 3 4">
        <text>2-methylene-3-methylsuccinate = dimethylmaleate</text>
        <dbReference type="Rhea" id="RHEA:23480"/>
        <dbReference type="ChEBI" id="CHEBI:17081"/>
        <dbReference type="ChEBI" id="CHEBI:57637"/>
        <dbReference type="EC" id="5.3.3.6"/>
    </reaction>
</comment>
<comment type="activity regulation">
    <text evidence="4">Inhibited by oxidized glutathione, p-chloromercuriphenylsulfonic acid and iodoacetic acid. Not inhibited by the chelating agent alpha,alpha-dipyridyl. Activity is slightly increased by EDTA. Not activated by Fe(2+), Mg(2+), Mn(2+) or Ca(2+). Unaffected by K(+), Na(+), NH4(+), Rb(+) or Li(+).</text>
</comment>
<comment type="biophysicochemical properties">
    <kinetics>
        <KM evidence="2 4">7 mM for (R,S)-3-methylitaconate</KM>
        <KM evidence="2 4">60 mM for itaconate</KM>
    </kinetics>
    <phDependence>
        <text evidence="2 4">Optimum pH is 6.8-8.2.</text>
    </phDependence>
</comment>
<comment type="pathway">
    <text evidence="1">Cofactor degradation; nicotinate degradation; propanoate and pyruvate from 6-hydroxynicotinate: step 6/8.</text>
</comment>
<comment type="subunit">
    <text evidence="2 3">Homotetramer.</text>
</comment>
<comment type="induction">
    <text evidence="4">By nicotinate.</text>
</comment>
<comment type="similarity">
    <text evidence="6">Belongs to the PrpF family.</text>
</comment>
<dbReference type="EC" id="5.3.3.6"/>
<dbReference type="EMBL" id="DQ310789">
    <property type="protein sequence ID" value="ABC88404.1"/>
    <property type="molecule type" value="Genomic_DNA"/>
</dbReference>
<dbReference type="RefSeq" id="WP_090245338.1">
    <property type="nucleotide sequence ID" value="NZ_FNOU01000012.1"/>
</dbReference>
<dbReference type="PDB" id="3G7K">
    <property type="method" value="X-ray"/>
    <property type="resolution" value="2.70 A"/>
    <property type="chains" value="A/B/C/D=1-380"/>
</dbReference>
<dbReference type="PDBsum" id="3G7K"/>
<dbReference type="SMR" id="Q0QLE6"/>
<dbReference type="STRING" id="1528.SAMN04488579_1128"/>
<dbReference type="KEGG" id="ag:ABC88404"/>
<dbReference type="OrthoDB" id="9779763at2"/>
<dbReference type="BioCyc" id="MetaCyc:MONOMER-11717"/>
<dbReference type="BRENDA" id="5.3.3.6">
    <property type="organism ID" value="1459"/>
</dbReference>
<dbReference type="UniPathway" id="UPA01010">
    <property type="reaction ID" value="UER01017"/>
</dbReference>
<dbReference type="EvolutionaryTrace" id="Q0QLE6"/>
<dbReference type="GO" id="GO:0050100">
    <property type="term" value="F:methylitaconate delta-isomerase activity"/>
    <property type="evidence" value="ECO:0000314"/>
    <property type="project" value="UniProtKB"/>
</dbReference>
<dbReference type="GO" id="GO:1901848">
    <property type="term" value="P:nicotinate catabolic process"/>
    <property type="evidence" value="ECO:0000314"/>
    <property type="project" value="UniProtKB"/>
</dbReference>
<dbReference type="FunFam" id="3.10.310.10:FF:000043">
    <property type="entry name" value="3-methylitaconate isomerase"/>
    <property type="match status" value="1"/>
</dbReference>
<dbReference type="Gene3D" id="3.10.310.10">
    <property type="entry name" value="Diaminopimelate Epimerase, Chain A, domain 1"/>
    <property type="match status" value="2"/>
</dbReference>
<dbReference type="InterPro" id="IPR007400">
    <property type="entry name" value="PrpF-like"/>
</dbReference>
<dbReference type="PANTHER" id="PTHR43709">
    <property type="entry name" value="ACONITATE ISOMERASE-RELATED"/>
    <property type="match status" value="1"/>
</dbReference>
<dbReference type="PANTHER" id="PTHR43709:SF2">
    <property type="entry name" value="DUF453 DOMAIN PROTEIN (AFU_ORTHOLOGUE AFUA_6G00360)"/>
    <property type="match status" value="1"/>
</dbReference>
<dbReference type="Pfam" id="PF04303">
    <property type="entry name" value="PrpF"/>
    <property type="match status" value="1"/>
</dbReference>
<dbReference type="SUPFAM" id="SSF54506">
    <property type="entry name" value="Diaminopimelate epimerase-like"/>
    <property type="match status" value="2"/>
</dbReference>